<keyword id="KW-0997">Cell inner membrane</keyword>
<keyword id="KW-1003">Cell membrane</keyword>
<keyword id="KW-0133">Cell shape</keyword>
<keyword id="KW-0961">Cell wall biogenesis/degradation</keyword>
<keyword id="KW-0328">Glycosyltransferase</keyword>
<keyword id="KW-0472">Membrane</keyword>
<keyword id="KW-0573">Peptidoglycan synthesis</keyword>
<keyword id="KW-0808">Transferase</keyword>
<keyword id="KW-0812">Transmembrane</keyword>
<keyword id="KW-1133">Transmembrane helix</keyword>
<dbReference type="EC" id="2.4.99.28" evidence="1"/>
<dbReference type="EMBL" id="CP000075">
    <property type="protein sequence ID" value="AAY39770.1"/>
    <property type="molecule type" value="Genomic_DNA"/>
</dbReference>
<dbReference type="RefSeq" id="WP_003402232.1">
    <property type="nucleotide sequence ID" value="NC_007005.1"/>
</dbReference>
<dbReference type="RefSeq" id="YP_237808.1">
    <property type="nucleotide sequence ID" value="NC_007005.1"/>
</dbReference>
<dbReference type="SMR" id="Q4ZM52"/>
<dbReference type="STRING" id="205918.Psyr_4743"/>
<dbReference type="CAZy" id="GT51">
    <property type="family name" value="Glycosyltransferase Family 51"/>
</dbReference>
<dbReference type="KEGG" id="psb:Psyr_4743"/>
<dbReference type="PATRIC" id="fig|205918.7.peg.4892"/>
<dbReference type="eggNOG" id="COG0744">
    <property type="taxonomic scope" value="Bacteria"/>
</dbReference>
<dbReference type="HOGENOM" id="CLU_006354_1_1_6"/>
<dbReference type="OrthoDB" id="9766909at2"/>
<dbReference type="UniPathway" id="UPA00219"/>
<dbReference type="Proteomes" id="UP000000426">
    <property type="component" value="Chromosome"/>
</dbReference>
<dbReference type="GO" id="GO:0009274">
    <property type="term" value="C:peptidoglycan-based cell wall"/>
    <property type="evidence" value="ECO:0007669"/>
    <property type="project" value="InterPro"/>
</dbReference>
<dbReference type="GO" id="GO:0005886">
    <property type="term" value="C:plasma membrane"/>
    <property type="evidence" value="ECO:0007669"/>
    <property type="project" value="UniProtKB-SubCell"/>
</dbReference>
<dbReference type="GO" id="GO:0016763">
    <property type="term" value="F:pentosyltransferase activity"/>
    <property type="evidence" value="ECO:0007669"/>
    <property type="project" value="InterPro"/>
</dbReference>
<dbReference type="GO" id="GO:0008955">
    <property type="term" value="F:peptidoglycan glycosyltransferase activity"/>
    <property type="evidence" value="ECO:0007669"/>
    <property type="project" value="UniProtKB-UniRule"/>
</dbReference>
<dbReference type="GO" id="GO:0071555">
    <property type="term" value="P:cell wall organization"/>
    <property type="evidence" value="ECO:0007669"/>
    <property type="project" value="UniProtKB-KW"/>
</dbReference>
<dbReference type="GO" id="GO:0009252">
    <property type="term" value="P:peptidoglycan biosynthetic process"/>
    <property type="evidence" value="ECO:0007669"/>
    <property type="project" value="UniProtKB-UniRule"/>
</dbReference>
<dbReference type="GO" id="GO:0008360">
    <property type="term" value="P:regulation of cell shape"/>
    <property type="evidence" value="ECO:0007669"/>
    <property type="project" value="UniProtKB-KW"/>
</dbReference>
<dbReference type="Gene3D" id="1.10.3810.10">
    <property type="entry name" value="Biosynthetic peptidoglycan transglycosylase-like"/>
    <property type="match status" value="1"/>
</dbReference>
<dbReference type="HAMAP" id="MF_00766">
    <property type="entry name" value="PGT_MtgA"/>
    <property type="match status" value="1"/>
</dbReference>
<dbReference type="InterPro" id="IPR001264">
    <property type="entry name" value="Glyco_trans_51"/>
</dbReference>
<dbReference type="InterPro" id="IPR023346">
    <property type="entry name" value="Lysozyme-like_dom_sf"/>
</dbReference>
<dbReference type="InterPro" id="IPR036950">
    <property type="entry name" value="PBP_transglycosylase"/>
</dbReference>
<dbReference type="InterPro" id="IPR011812">
    <property type="entry name" value="Pep_trsgly"/>
</dbReference>
<dbReference type="NCBIfam" id="TIGR02070">
    <property type="entry name" value="mono_pep_trsgly"/>
    <property type="match status" value="1"/>
</dbReference>
<dbReference type="PANTHER" id="PTHR30400:SF0">
    <property type="entry name" value="BIOSYNTHETIC PEPTIDOGLYCAN TRANSGLYCOSYLASE"/>
    <property type="match status" value="1"/>
</dbReference>
<dbReference type="PANTHER" id="PTHR30400">
    <property type="entry name" value="MONOFUNCTIONAL BIOSYNTHETIC PEPTIDOGLYCAN TRANSGLYCOSYLASE"/>
    <property type="match status" value="1"/>
</dbReference>
<dbReference type="Pfam" id="PF00912">
    <property type="entry name" value="Transgly"/>
    <property type="match status" value="1"/>
</dbReference>
<dbReference type="SUPFAM" id="SSF53955">
    <property type="entry name" value="Lysozyme-like"/>
    <property type="match status" value="1"/>
</dbReference>
<organism>
    <name type="scientific">Pseudomonas syringae pv. syringae (strain B728a)</name>
    <dbReference type="NCBI Taxonomy" id="205918"/>
    <lineage>
        <taxon>Bacteria</taxon>
        <taxon>Pseudomonadati</taxon>
        <taxon>Pseudomonadota</taxon>
        <taxon>Gammaproteobacteria</taxon>
        <taxon>Pseudomonadales</taxon>
        <taxon>Pseudomonadaceae</taxon>
        <taxon>Pseudomonas</taxon>
        <taxon>Pseudomonas syringae</taxon>
    </lineage>
</organism>
<gene>
    <name evidence="1" type="primary">mtgA</name>
    <name type="ordered locus">Psyr_4743</name>
</gene>
<reference key="1">
    <citation type="journal article" date="2005" name="Proc. Natl. Acad. Sci. U.S.A.">
        <title>Comparison of the complete genome sequences of Pseudomonas syringae pv. syringae B728a and pv. tomato DC3000.</title>
        <authorList>
            <person name="Feil H."/>
            <person name="Feil W.S."/>
            <person name="Chain P."/>
            <person name="Larimer F."/>
            <person name="Dibartolo G."/>
            <person name="Copeland A."/>
            <person name="Lykidis A."/>
            <person name="Trong S."/>
            <person name="Nolan M."/>
            <person name="Goltsman E."/>
            <person name="Thiel J."/>
            <person name="Malfatti S."/>
            <person name="Loper J.E."/>
            <person name="Lapidus A."/>
            <person name="Detter J.C."/>
            <person name="Land M."/>
            <person name="Richardson P.M."/>
            <person name="Kyrpides N.C."/>
            <person name="Ivanova N."/>
            <person name="Lindow S.E."/>
        </authorList>
    </citation>
    <scope>NUCLEOTIDE SEQUENCE [LARGE SCALE GENOMIC DNA]</scope>
    <source>
        <strain>B728a</strain>
    </source>
</reference>
<protein>
    <recommendedName>
        <fullName evidence="1">Biosynthetic peptidoglycan transglycosylase</fullName>
        <ecNumber evidence="1">2.4.99.28</ecNumber>
    </recommendedName>
    <alternativeName>
        <fullName evidence="1">Glycan polymerase</fullName>
    </alternativeName>
    <alternativeName>
        <fullName evidence="1">Peptidoglycan glycosyltransferase MtgA</fullName>
        <shortName evidence="1">PGT</shortName>
    </alternativeName>
</protein>
<sequence>MLQSILRRIVKALLWFAAGSVLVVLVLRWVPPPGTALMVERKVESWFDGEPIDLQRDWEPLDKISDNLKIAVIAGEDQKFAEHWGFDVDAIQAAILHNERGGSIRGASTLSQQVSKNLFLWSGRSYLRKGLEAWFTMLIELLWSKERILEVYLNSVEWDEGVFGAQAAAQHHFRTNASALSAQQASYLAAVLPNPRQWSASHPSSYVSRRAGWIRQQMRQLGGDEYLQGLNSSRRW</sequence>
<accession>Q4ZM52</accession>
<name>MTGA_PSEU2</name>
<evidence type="ECO:0000255" key="1">
    <source>
        <dbReference type="HAMAP-Rule" id="MF_00766"/>
    </source>
</evidence>
<feature type="chain" id="PRO_0000257682" description="Biosynthetic peptidoglycan transglycosylase">
    <location>
        <begin position="1"/>
        <end position="236"/>
    </location>
</feature>
<feature type="transmembrane region" description="Helical" evidence="1">
    <location>
        <begin position="12"/>
        <end position="31"/>
    </location>
</feature>
<proteinExistence type="inferred from homology"/>
<comment type="function">
    <text evidence="1">Peptidoglycan polymerase that catalyzes glycan chain elongation from lipid-linked precursors.</text>
</comment>
<comment type="catalytic activity">
    <reaction evidence="1">
        <text>[GlcNAc-(1-&gt;4)-Mur2Ac(oyl-L-Ala-gamma-D-Glu-L-Lys-D-Ala-D-Ala)](n)-di-trans,octa-cis-undecaprenyl diphosphate + beta-D-GlcNAc-(1-&gt;4)-Mur2Ac(oyl-L-Ala-gamma-D-Glu-L-Lys-D-Ala-D-Ala)-di-trans,octa-cis-undecaprenyl diphosphate = [GlcNAc-(1-&gt;4)-Mur2Ac(oyl-L-Ala-gamma-D-Glu-L-Lys-D-Ala-D-Ala)](n+1)-di-trans,octa-cis-undecaprenyl diphosphate + di-trans,octa-cis-undecaprenyl diphosphate + H(+)</text>
        <dbReference type="Rhea" id="RHEA:23708"/>
        <dbReference type="Rhea" id="RHEA-COMP:9602"/>
        <dbReference type="Rhea" id="RHEA-COMP:9603"/>
        <dbReference type="ChEBI" id="CHEBI:15378"/>
        <dbReference type="ChEBI" id="CHEBI:58405"/>
        <dbReference type="ChEBI" id="CHEBI:60033"/>
        <dbReference type="ChEBI" id="CHEBI:78435"/>
        <dbReference type="EC" id="2.4.99.28"/>
    </reaction>
</comment>
<comment type="pathway">
    <text evidence="1">Cell wall biogenesis; peptidoglycan biosynthesis.</text>
</comment>
<comment type="subcellular location">
    <subcellularLocation>
        <location evidence="1">Cell inner membrane</location>
        <topology evidence="1">Single-pass membrane protein</topology>
    </subcellularLocation>
</comment>
<comment type="similarity">
    <text evidence="1">Belongs to the glycosyltransferase 51 family.</text>
</comment>